<sequence length="251" mass="28027">MAHRLQMRLLTWDVKDTLIKLRRPVGEEYASKARAHGVVVEDITVEQAFRQAYRAQSHNFPNYGLSRGLTSRQWWKDVVLHTFRLAGVPDAQAMTPVADQLYEDFSSPFTWQVLEGAEMTLKGCRKRGLKLAVVSNFDRRLEDILTGLGLREHFDFVLTSEAVGCPKPDPRIFREALQRACVEPAVAAHVGDSYLCDYQGSQAVGMHSFLVAGSEPLDSAVRDSVPKEHILPSLSHLLPALDLLEASSPMS</sequence>
<keyword id="KW-0007">Acetylation</keyword>
<keyword id="KW-1185">Reference proteome</keyword>
<dbReference type="EMBL" id="AK013245">
    <property type="protein sequence ID" value="BAB28741.1"/>
    <property type="molecule type" value="mRNA"/>
</dbReference>
<dbReference type="EMBL" id="AL732594">
    <property type="status" value="NOT_ANNOTATED_CDS"/>
    <property type="molecule type" value="Genomic_DNA"/>
</dbReference>
<dbReference type="EMBL" id="BC003491">
    <property type="protein sequence ID" value="AAH03491.1"/>
    <property type="molecule type" value="mRNA"/>
</dbReference>
<dbReference type="CCDS" id="CCDS18242.1"/>
<dbReference type="RefSeq" id="NP_077219.1">
    <property type="nucleotide sequence ID" value="NM_024257.1"/>
</dbReference>
<dbReference type="SMR" id="Q9CYW4"/>
<dbReference type="FunCoup" id="Q9CYW4">
    <property type="interactions" value="1919"/>
</dbReference>
<dbReference type="STRING" id="10090.ENSMUSP00000036337"/>
<dbReference type="iPTMnet" id="Q9CYW4"/>
<dbReference type="PhosphoSitePlus" id="Q9CYW4"/>
<dbReference type="SwissPalm" id="Q9CYW4"/>
<dbReference type="jPOST" id="Q9CYW4"/>
<dbReference type="PaxDb" id="10090-ENSMUSP00000036337"/>
<dbReference type="PeptideAtlas" id="Q9CYW4"/>
<dbReference type="ProteomicsDB" id="270954"/>
<dbReference type="Pumba" id="Q9CYW4"/>
<dbReference type="Antibodypedia" id="15302">
    <property type="antibodies" value="164 antibodies from 23 providers"/>
</dbReference>
<dbReference type="DNASU" id="72748"/>
<dbReference type="Ensembl" id="ENSMUST00000037820.3">
    <property type="protein sequence ID" value="ENSMUSP00000036337.3"/>
    <property type="gene ID" value="ENSMUSG00000038422.3"/>
</dbReference>
<dbReference type="GeneID" id="72748"/>
<dbReference type="KEGG" id="mmu:72748"/>
<dbReference type="UCSC" id="uc008tey.1">
    <property type="organism name" value="mouse"/>
</dbReference>
<dbReference type="AGR" id="MGI:1919998"/>
<dbReference type="CTD" id="81932"/>
<dbReference type="MGI" id="MGI:1919998">
    <property type="gene designation" value="Hdhd3"/>
</dbReference>
<dbReference type="VEuPathDB" id="HostDB:ENSMUSG00000038422"/>
<dbReference type="eggNOG" id="KOG3085">
    <property type="taxonomic scope" value="Eukaryota"/>
</dbReference>
<dbReference type="GeneTree" id="ENSGT00390000015582"/>
<dbReference type="HOGENOM" id="CLU_045011_8_0_1"/>
<dbReference type="InParanoid" id="Q9CYW4"/>
<dbReference type="OMA" id="KCVGIIS"/>
<dbReference type="OrthoDB" id="444127at2759"/>
<dbReference type="PhylomeDB" id="Q9CYW4"/>
<dbReference type="TreeFam" id="TF315144"/>
<dbReference type="BioGRID-ORCS" id="72748">
    <property type="hits" value="1 hit in 79 CRISPR screens"/>
</dbReference>
<dbReference type="ChiTaRS" id="Hdhd3">
    <property type="organism name" value="mouse"/>
</dbReference>
<dbReference type="PRO" id="PR:Q9CYW4"/>
<dbReference type="Proteomes" id="UP000000589">
    <property type="component" value="Chromosome 4"/>
</dbReference>
<dbReference type="RNAct" id="Q9CYW4">
    <property type="molecule type" value="protein"/>
</dbReference>
<dbReference type="Bgee" id="ENSMUSG00000038422">
    <property type="expression patterns" value="Expressed in small intestine Peyer's patch and 151 other cell types or tissues"/>
</dbReference>
<dbReference type="GO" id="GO:0005739">
    <property type="term" value="C:mitochondrion"/>
    <property type="evidence" value="ECO:0007005"/>
    <property type="project" value="MGI"/>
</dbReference>
<dbReference type="GO" id="GO:0005730">
    <property type="term" value="C:nucleolus"/>
    <property type="evidence" value="ECO:0007669"/>
    <property type="project" value="Ensembl"/>
</dbReference>
<dbReference type="CDD" id="cd16415">
    <property type="entry name" value="HAD_dREG-2_like"/>
    <property type="match status" value="1"/>
</dbReference>
<dbReference type="FunFam" id="1.10.150.720:FF:000001">
    <property type="entry name" value="Haloacid dehalogenase-like hydrolase domain-containing protein 3"/>
    <property type="match status" value="1"/>
</dbReference>
<dbReference type="Gene3D" id="3.40.50.1000">
    <property type="entry name" value="HAD superfamily/HAD-like"/>
    <property type="match status" value="1"/>
</dbReference>
<dbReference type="Gene3D" id="1.10.150.720">
    <property type="entry name" value="Haloacid dehalogenase-like hydrolase"/>
    <property type="match status" value="1"/>
</dbReference>
<dbReference type="InterPro" id="IPR051828">
    <property type="entry name" value="HAD-like_hydrolase_domain"/>
</dbReference>
<dbReference type="InterPro" id="IPR036412">
    <property type="entry name" value="HAD-like_sf"/>
</dbReference>
<dbReference type="InterPro" id="IPR006439">
    <property type="entry name" value="HAD-SF_hydro_IA"/>
</dbReference>
<dbReference type="InterPro" id="IPR011949">
    <property type="entry name" value="HAD-SF_hydro_IA_REG-2-like"/>
</dbReference>
<dbReference type="InterPro" id="IPR044924">
    <property type="entry name" value="HAD-SF_hydro_IA_REG-2-like_cap"/>
</dbReference>
<dbReference type="InterPro" id="IPR023214">
    <property type="entry name" value="HAD_sf"/>
</dbReference>
<dbReference type="NCBIfam" id="TIGR02252">
    <property type="entry name" value="DREG-2"/>
    <property type="match status" value="1"/>
</dbReference>
<dbReference type="NCBIfam" id="TIGR01549">
    <property type="entry name" value="HAD-SF-IA-v1"/>
    <property type="match status" value="1"/>
</dbReference>
<dbReference type="NCBIfam" id="TIGR01509">
    <property type="entry name" value="HAD-SF-IA-v3"/>
    <property type="match status" value="1"/>
</dbReference>
<dbReference type="PANTHER" id="PTHR46191">
    <property type="match status" value="1"/>
</dbReference>
<dbReference type="PANTHER" id="PTHR46191:SF2">
    <property type="entry name" value="HALOACID DEHALOGENASE-LIKE HYDROLASE DOMAIN-CONTAINING PROTEIN 3"/>
    <property type="match status" value="1"/>
</dbReference>
<dbReference type="Pfam" id="PF00702">
    <property type="entry name" value="Hydrolase"/>
    <property type="match status" value="1"/>
</dbReference>
<dbReference type="PRINTS" id="PR00413">
    <property type="entry name" value="HADHALOGNASE"/>
</dbReference>
<dbReference type="SFLD" id="SFLDG01135">
    <property type="entry name" value="C1.5.6:_HAD__Beta-PGM__Phospha"/>
    <property type="match status" value="1"/>
</dbReference>
<dbReference type="SFLD" id="SFLDS00003">
    <property type="entry name" value="Haloacid_Dehalogenase"/>
    <property type="match status" value="1"/>
</dbReference>
<dbReference type="SUPFAM" id="SSF56784">
    <property type="entry name" value="HAD-like"/>
    <property type="match status" value="1"/>
</dbReference>
<organism>
    <name type="scientific">Mus musculus</name>
    <name type="common">Mouse</name>
    <dbReference type="NCBI Taxonomy" id="10090"/>
    <lineage>
        <taxon>Eukaryota</taxon>
        <taxon>Metazoa</taxon>
        <taxon>Chordata</taxon>
        <taxon>Craniata</taxon>
        <taxon>Vertebrata</taxon>
        <taxon>Euteleostomi</taxon>
        <taxon>Mammalia</taxon>
        <taxon>Eutheria</taxon>
        <taxon>Euarchontoglires</taxon>
        <taxon>Glires</taxon>
        <taxon>Rodentia</taxon>
        <taxon>Myomorpha</taxon>
        <taxon>Muroidea</taxon>
        <taxon>Muridae</taxon>
        <taxon>Murinae</taxon>
        <taxon>Mus</taxon>
        <taxon>Mus</taxon>
    </lineage>
</organism>
<proteinExistence type="evidence at protein level"/>
<feature type="chain" id="PRO_0000287314" description="Haloacid dehalogenase-like hydrolase domain-containing protein 3">
    <location>
        <begin position="1"/>
        <end position="251"/>
    </location>
</feature>
<feature type="modified residue" description="N6-acetyllysine; alternate" evidence="2 3">
    <location>
        <position position="15"/>
    </location>
</feature>
<feature type="modified residue" description="N6-succinyllysine; alternate" evidence="3">
    <location>
        <position position="15"/>
    </location>
</feature>
<feature type="modified residue" description="N6-acetyllysine" evidence="2">
    <location>
        <position position="130"/>
    </location>
</feature>
<comment type="similarity">
    <text evidence="1">Belongs to the HAD-like hydrolase superfamily.</text>
</comment>
<protein>
    <recommendedName>
        <fullName>Haloacid dehalogenase-like hydrolase domain-containing protein 3</fullName>
    </recommendedName>
</protein>
<name>HDHD3_MOUSE</name>
<evidence type="ECO:0000305" key="1"/>
<evidence type="ECO:0007744" key="2">
    <source>
    </source>
</evidence>
<evidence type="ECO:0007744" key="3">
    <source>
    </source>
</evidence>
<accession>Q9CYW4</accession>
<gene>
    <name type="primary">Hdhd3</name>
</gene>
<reference key="1">
    <citation type="journal article" date="2005" name="Science">
        <title>The transcriptional landscape of the mammalian genome.</title>
        <authorList>
            <person name="Carninci P."/>
            <person name="Kasukawa T."/>
            <person name="Katayama S."/>
            <person name="Gough J."/>
            <person name="Frith M.C."/>
            <person name="Maeda N."/>
            <person name="Oyama R."/>
            <person name="Ravasi T."/>
            <person name="Lenhard B."/>
            <person name="Wells C."/>
            <person name="Kodzius R."/>
            <person name="Shimokawa K."/>
            <person name="Bajic V.B."/>
            <person name="Brenner S.E."/>
            <person name="Batalov S."/>
            <person name="Forrest A.R."/>
            <person name="Zavolan M."/>
            <person name="Davis M.J."/>
            <person name="Wilming L.G."/>
            <person name="Aidinis V."/>
            <person name="Allen J.E."/>
            <person name="Ambesi-Impiombato A."/>
            <person name="Apweiler R."/>
            <person name="Aturaliya R.N."/>
            <person name="Bailey T.L."/>
            <person name="Bansal M."/>
            <person name="Baxter L."/>
            <person name="Beisel K.W."/>
            <person name="Bersano T."/>
            <person name="Bono H."/>
            <person name="Chalk A.M."/>
            <person name="Chiu K.P."/>
            <person name="Choudhary V."/>
            <person name="Christoffels A."/>
            <person name="Clutterbuck D.R."/>
            <person name="Crowe M.L."/>
            <person name="Dalla E."/>
            <person name="Dalrymple B.P."/>
            <person name="de Bono B."/>
            <person name="Della Gatta G."/>
            <person name="di Bernardo D."/>
            <person name="Down T."/>
            <person name="Engstrom P."/>
            <person name="Fagiolini M."/>
            <person name="Faulkner G."/>
            <person name="Fletcher C.F."/>
            <person name="Fukushima T."/>
            <person name="Furuno M."/>
            <person name="Futaki S."/>
            <person name="Gariboldi M."/>
            <person name="Georgii-Hemming P."/>
            <person name="Gingeras T.R."/>
            <person name="Gojobori T."/>
            <person name="Green R.E."/>
            <person name="Gustincich S."/>
            <person name="Harbers M."/>
            <person name="Hayashi Y."/>
            <person name="Hensch T.K."/>
            <person name="Hirokawa N."/>
            <person name="Hill D."/>
            <person name="Huminiecki L."/>
            <person name="Iacono M."/>
            <person name="Ikeo K."/>
            <person name="Iwama A."/>
            <person name="Ishikawa T."/>
            <person name="Jakt M."/>
            <person name="Kanapin A."/>
            <person name="Katoh M."/>
            <person name="Kawasawa Y."/>
            <person name="Kelso J."/>
            <person name="Kitamura H."/>
            <person name="Kitano H."/>
            <person name="Kollias G."/>
            <person name="Krishnan S.P."/>
            <person name="Kruger A."/>
            <person name="Kummerfeld S.K."/>
            <person name="Kurochkin I.V."/>
            <person name="Lareau L.F."/>
            <person name="Lazarevic D."/>
            <person name="Lipovich L."/>
            <person name="Liu J."/>
            <person name="Liuni S."/>
            <person name="McWilliam S."/>
            <person name="Madan Babu M."/>
            <person name="Madera M."/>
            <person name="Marchionni L."/>
            <person name="Matsuda H."/>
            <person name="Matsuzawa S."/>
            <person name="Miki H."/>
            <person name="Mignone F."/>
            <person name="Miyake S."/>
            <person name="Morris K."/>
            <person name="Mottagui-Tabar S."/>
            <person name="Mulder N."/>
            <person name="Nakano N."/>
            <person name="Nakauchi H."/>
            <person name="Ng P."/>
            <person name="Nilsson R."/>
            <person name="Nishiguchi S."/>
            <person name="Nishikawa S."/>
            <person name="Nori F."/>
            <person name="Ohara O."/>
            <person name="Okazaki Y."/>
            <person name="Orlando V."/>
            <person name="Pang K.C."/>
            <person name="Pavan W.J."/>
            <person name="Pavesi G."/>
            <person name="Pesole G."/>
            <person name="Petrovsky N."/>
            <person name="Piazza S."/>
            <person name="Reed J."/>
            <person name="Reid J.F."/>
            <person name="Ring B.Z."/>
            <person name="Ringwald M."/>
            <person name="Rost B."/>
            <person name="Ruan Y."/>
            <person name="Salzberg S.L."/>
            <person name="Sandelin A."/>
            <person name="Schneider C."/>
            <person name="Schoenbach C."/>
            <person name="Sekiguchi K."/>
            <person name="Semple C.A."/>
            <person name="Seno S."/>
            <person name="Sessa L."/>
            <person name="Sheng Y."/>
            <person name="Shibata Y."/>
            <person name="Shimada H."/>
            <person name="Shimada K."/>
            <person name="Silva D."/>
            <person name="Sinclair B."/>
            <person name="Sperling S."/>
            <person name="Stupka E."/>
            <person name="Sugiura K."/>
            <person name="Sultana R."/>
            <person name="Takenaka Y."/>
            <person name="Taki K."/>
            <person name="Tammoja K."/>
            <person name="Tan S.L."/>
            <person name="Tang S."/>
            <person name="Taylor M.S."/>
            <person name="Tegner J."/>
            <person name="Teichmann S.A."/>
            <person name="Ueda H.R."/>
            <person name="van Nimwegen E."/>
            <person name="Verardo R."/>
            <person name="Wei C.L."/>
            <person name="Yagi K."/>
            <person name="Yamanishi H."/>
            <person name="Zabarovsky E."/>
            <person name="Zhu S."/>
            <person name="Zimmer A."/>
            <person name="Hide W."/>
            <person name="Bult C."/>
            <person name="Grimmond S.M."/>
            <person name="Teasdale R.D."/>
            <person name="Liu E.T."/>
            <person name="Brusic V."/>
            <person name="Quackenbush J."/>
            <person name="Wahlestedt C."/>
            <person name="Mattick J.S."/>
            <person name="Hume D.A."/>
            <person name="Kai C."/>
            <person name="Sasaki D."/>
            <person name="Tomaru Y."/>
            <person name="Fukuda S."/>
            <person name="Kanamori-Katayama M."/>
            <person name="Suzuki M."/>
            <person name="Aoki J."/>
            <person name="Arakawa T."/>
            <person name="Iida J."/>
            <person name="Imamura K."/>
            <person name="Itoh M."/>
            <person name="Kato T."/>
            <person name="Kawaji H."/>
            <person name="Kawagashira N."/>
            <person name="Kawashima T."/>
            <person name="Kojima M."/>
            <person name="Kondo S."/>
            <person name="Konno H."/>
            <person name="Nakano K."/>
            <person name="Ninomiya N."/>
            <person name="Nishio T."/>
            <person name="Okada M."/>
            <person name="Plessy C."/>
            <person name="Shibata K."/>
            <person name="Shiraki T."/>
            <person name="Suzuki S."/>
            <person name="Tagami M."/>
            <person name="Waki K."/>
            <person name="Watahiki A."/>
            <person name="Okamura-Oho Y."/>
            <person name="Suzuki H."/>
            <person name="Kawai J."/>
            <person name="Hayashizaki Y."/>
        </authorList>
    </citation>
    <scope>NUCLEOTIDE SEQUENCE [LARGE SCALE MRNA]</scope>
    <source>
        <strain>C57BL/6J</strain>
        <tissue>Embryo</tissue>
    </source>
</reference>
<reference key="2">
    <citation type="journal article" date="2009" name="PLoS Biol.">
        <title>Lineage-specific biology revealed by a finished genome assembly of the mouse.</title>
        <authorList>
            <person name="Church D.M."/>
            <person name="Goodstadt L."/>
            <person name="Hillier L.W."/>
            <person name="Zody M.C."/>
            <person name="Goldstein S."/>
            <person name="She X."/>
            <person name="Bult C.J."/>
            <person name="Agarwala R."/>
            <person name="Cherry J.L."/>
            <person name="DiCuccio M."/>
            <person name="Hlavina W."/>
            <person name="Kapustin Y."/>
            <person name="Meric P."/>
            <person name="Maglott D."/>
            <person name="Birtle Z."/>
            <person name="Marques A.C."/>
            <person name="Graves T."/>
            <person name="Zhou S."/>
            <person name="Teague B."/>
            <person name="Potamousis K."/>
            <person name="Churas C."/>
            <person name="Place M."/>
            <person name="Herschleb J."/>
            <person name="Runnheim R."/>
            <person name="Forrest D."/>
            <person name="Amos-Landgraf J."/>
            <person name="Schwartz D.C."/>
            <person name="Cheng Z."/>
            <person name="Lindblad-Toh K."/>
            <person name="Eichler E.E."/>
            <person name="Ponting C.P."/>
        </authorList>
    </citation>
    <scope>NUCLEOTIDE SEQUENCE [LARGE SCALE GENOMIC DNA]</scope>
    <source>
        <strain>C57BL/6J</strain>
    </source>
</reference>
<reference key="3">
    <citation type="journal article" date="2004" name="Genome Res.">
        <title>The status, quality, and expansion of the NIH full-length cDNA project: the Mammalian Gene Collection (MGC).</title>
        <authorList>
            <consortium name="The MGC Project Team"/>
        </authorList>
    </citation>
    <scope>NUCLEOTIDE SEQUENCE [LARGE SCALE MRNA]</scope>
    <source>
        <tissue>Mammary tumor</tissue>
    </source>
</reference>
<reference key="4">
    <citation type="journal article" date="2010" name="Cell">
        <title>A tissue-specific atlas of mouse protein phosphorylation and expression.</title>
        <authorList>
            <person name="Huttlin E.L."/>
            <person name="Jedrychowski M.P."/>
            <person name="Elias J.E."/>
            <person name="Goswami T."/>
            <person name="Rad R."/>
            <person name="Beausoleil S.A."/>
            <person name="Villen J."/>
            <person name="Haas W."/>
            <person name="Sowa M.E."/>
            <person name="Gygi S.P."/>
        </authorList>
    </citation>
    <scope>IDENTIFICATION BY MASS SPECTROMETRY [LARGE SCALE ANALYSIS]</scope>
    <source>
        <tissue>Brain</tissue>
        <tissue>Brown adipose tissue</tissue>
        <tissue>Heart</tissue>
        <tissue>Kidney</tissue>
        <tissue>Liver</tissue>
        <tissue>Lung</tissue>
        <tissue>Pancreas</tissue>
        <tissue>Testis</tissue>
    </source>
</reference>
<reference key="5">
    <citation type="journal article" date="2013" name="Mol. Cell">
        <title>SIRT5-mediated lysine desuccinylation impacts diverse metabolic pathways.</title>
        <authorList>
            <person name="Park J."/>
            <person name="Chen Y."/>
            <person name="Tishkoff D.X."/>
            <person name="Peng C."/>
            <person name="Tan M."/>
            <person name="Dai L."/>
            <person name="Xie Z."/>
            <person name="Zhang Y."/>
            <person name="Zwaans B.M."/>
            <person name="Skinner M.E."/>
            <person name="Lombard D.B."/>
            <person name="Zhao Y."/>
        </authorList>
    </citation>
    <scope>ACETYLATION [LARGE SCALE ANALYSIS] AT LYS-15</scope>
    <scope>SUCCINYLATION [LARGE SCALE ANALYSIS] AT LYS-15</scope>
    <scope>IDENTIFICATION BY MASS SPECTROMETRY [LARGE SCALE ANALYSIS]</scope>
    <source>
        <tissue>Embryonic fibroblast</tissue>
        <tissue>Liver</tissue>
    </source>
</reference>
<reference key="6">
    <citation type="journal article" date="2013" name="Proc. Natl. Acad. Sci. U.S.A.">
        <title>Label-free quantitative proteomics of the lysine acetylome in mitochondria identifies substrates of SIRT3 in metabolic pathways.</title>
        <authorList>
            <person name="Rardin M.J."/>
            <person name="Newman J.C."/>
            <person name="Held J.M."/>
            <person name="Cusack M.P."/>
            <person name="Sorensen D.J."/>
            <person name="Li B."/>
            <person name="Schilling B."/>
            <person name="Mooney S.D."/>
            <person name="Kahn C.R."/>
            <person name="Verdin E."/>
            <person name="Gibson B.W."/>
        </authorList>
    </citation>
    <scope>ACETYLATION [LARGE SCALE ANALYSIS] AT LYS-15 AND LYS-130</scope>
    <scope>IDENTIFICATION BY MASS SPECTROMETRY [LARGE SCALE ANALYSIS]</scope>
    <source>
        <tissue>Liver</tissue>
    </source>
</reference>